<organism>
    <name type="scientific">Lodderomyces elongisporus (strain ATCC 11503 / CBS 2605 / JCM 1781 / NBRC 1676 / NRRL YB-4239)</name>
    <name type="common">Yeast</name>
    <name type="synonym">Saccharomyces elongisporus</name>
    <dbReference type="NCBI Taxonomy" id="379508"/>
    <lineage>
        <taxon>Eukaryota</taxon>
        <taxon>Fungi</taxon>
        <taxon>Dikarya</taxon>
        <taxon>Ascomycota</taxon>
        <taxon>Saccharomycotina</taxon>
        <taxon>Pichiomycetes</taxon>
        <taxon>Debaryomycetaceae</taxon>
        <taxon>Candida/Lodderomyces clade</taxon>
        <taxon>Lodderomyces</taxon>
    </lineage>
</organism>
<evidence type="ECO:0000255" key="1">
    <source>
        <dbReference type="HAMAP-Rule" id="MF_03055"/>
    </source>
</evidence>
<evidence type="ECO:0000256" key="2">
    <source>
        <dbReference type="SAM" id="MobiDB-lite"/>
    </source>
</evidence>
<protein>
    <recommendedName>
        <fullName evidence="1">tRNA (guanine-N(7)-)-methyltransferase</fullName>
        <ecNumber evidence="1">2.1.1.33</ecNumber>
    </recommendedName>
    <alternativeName>
        <fullName evidence="1">Transfer RNA methyltransferase 8</fullName>
    </alternativeName>
    <alternativeName>
        <fullName evidence="1">tRNA (guanine(46)-N(7))-methyltransferase</fullName>
    </alternativeName>
    <alternativeName>
        <fullName evidence="1">tRNA(m7G46)-methyltransferase</fullName>
    </alternativeName>
</protein>
<dbReference type="EC" id="2.1.1.33" evidence="1"/>
<dbReference type="EMBL" id="CH981534">
    <property type="protein sequence ID" value="EDK47492.1"/>
    <property type="molecule type" value="Genomic_DNA"/>
</dbReference>
<dbReference type="RefSeq" id="XP_001523127.1">
    <property type="nucleotide sequence ID" value="XM_001523077.1"/>
</dbReference>
<dbReference type="SMR" id="A5E7T4"/>
<dbReference type="FunCoup" id="A5E7T4">
    <property type="interactions" value="521"/>
</dbReference>
<dbReference type="STRING" id="379508.A5E7T4"/>
<dbReference type="GeneID" id="5230260"/>
<dbReference type="KEGG" id="lel:PVL30_004431"/>
<dbReference type="VEuPathDB" id="FungiDB:LELG_05673"/>
<dbReference type="eggNOG" id="KOG3115">
    <property type="taxonomic scope" value="Eukaryota"/>
</dbReference>
<dbReference type="HOGENOM" id="CLU_050910_3_1_1"/>
<dbReference type="InParanoid" id="A5E7T4"/>
<dbReference type="OMA" id="LPNYFAK"/>
<dbReference type="OrthoDB" id="47276at2759"/>
<dbReference type="UniPathway" id="UPA00989"/>
<dbReference type="Proteomes" id="UP000001996">
    <property type="component" value="Unassembled WGS sequence"/>
</dbReference>
<dbReference type="GO" id="GO:0005634">
    <property type="term" value="C:nucleus"/>
    <property type="evidence" value="ECO:0007669"/>
    <property type="project" value="UniProtKB-SubCell"/>
</dbReference>
<dbReference type="GO" id="GO:0106143">
    <property type="term" value="C:tRNA (m7G46) methyltransferase complex"/>
    <property type="evidence" value="ECO:0007669"/>
    <property type="project" value="EnsemblFungi"/>
</dbReference>
<dbReference type="GO" id="GO:0008176">
    <property type="term" value="F:tRNA (guanine(46)-N7)-methyltransferase activity"/>
    <property type="evidence" value="ECO:0007669"/>
    <property type="project" value="UniProtKB-UniRule"/>
</dbReference>
<dbReference type="GO" id="GO:0000049">
    <property type="term" value="F:tRNA binding"/>
    <property type="evidence" value="ECO:0007669"/>
    <property type="project" value="UniProtKB-UniRule"/>
</dbReference>
<dbReference type="CDD" id="cd02440">
    <property type="entry name" value="AdoMet_MTases"/>
    <property type="match status" value="1"/>
</dbReference>
<dbReference type="FunFam" id="3.40.50.150:FF:000060">
    <property type="entry name" value="tRNA (guanine-N(7)-)-methyltransferase"/>
    <property type="match status" value="1"/>
</dbReference>
<dbReference type="Gene3D" id="3.40.50.150">
    <property type="entry name" value="Vaccinia Virus protein VP39"/>
    <property type="match status" value="1"/>
</dbReference>
<dbReference type="HAMAP" id="MF_03055">
    <property type="entry name" value="tRNA_methyltr_TrmB_euk"/>
    <property type="match status" value="1"/>
</dbReference>
<dbReference type="InterPro" id="IPR029063">
    <property type="entry name" value="SAM-dependent_MTases_sf"/>
</dbReference>
<dbReference type="InterPro" id="IPR025763">
    <property type="entry name" value="Trm8_euk"/>
</dbReference>
<dbReference type="InterPro" id="IPR003358">
    <property type="entry name" value="tRNA_(Gua-N-7)_MeTrfase_Trmb"/>
</dbReference>
<dbReference type="NCBIfam" id="TIGR00091">
    <property type="entry name" value="tRNA (guanosine(46)-N7)-methyltransferase TrmB"/>
    <property type="match status" value="1"/>
</dbReference>
<dbReference type="PANTHER" id="PTHR23417">
    <property type="entry name" value="3-DEOXY-D-MANNO-OCTULOSONIC-ACID TRANSFERASE/TRNA GUANINE-N 7 - -METHYLTRANSFERASE"/>
    <property type="match status" value="1"/>
</dbReference>
<dbReference type="PANTHER" id="PTHR23417:SF16">
    <property type="entry name" value="TRNA (GUANINE-N(7)-)-METHYLTRANSFERASE"/>
    <property type="match status" value="1"/>
</dbReference>
<dbReference type="Pfam" id="PF02390">
    <property type="entry name" value="Methyltransf_4"/>
    <property type="match status" value="1"/>
</dbReference>
<dbReference type="SUPFAM" id="SSF53335">
    <property type="entry name" value="S-adenosyl-L-methionine-dependent methyltransferases"/>
    <property type="match status" value="1"/>
</dbReference>
<dbReference type="PROSITE" id="PS51625">
    <property type="entry name" value="SAM_MT_TRMB"/>
    <property type="match status" value="1"/>
</dbReference>
<reference key="1">
    <citation type="journal article" date="2009" name="Nature">
        <title>Evolution of pathogenicity and sexual reproduction in eight Candida genomes.</title>
        <authorList>
            <person name="Butler G."/>
            <person name="Rasmussen M.D."/>
            <person name="Lin M.F."/>
            <person name="Santos M.A.S."/>
            <person name="Sakthikumar S."/>
            <person name="Munro C.A."/>
            <person name="Rheinbay E."/>
            <person name="Grabherr M."/>
            <person name="Forche A."/>
            <person name="Reedy J.L."/>
            <person name="Agrafioti I."/>
            <person name="Arnaud M.B."/>
            <person name="Bates S."/>
            <person name="Brown A.J.P."/>
            <person name="Brunke S."/>
            <person name="Costanzo M.C."/>
            <person name="Fitzpatrick D.A."/>
            <person name="de Groot P.W.J."/>
            <person name="Harris D."/>
            <person name="Hoyer L.L."/>
            <person name="Hube B."/>
            <person name="Klis F.M."/>
            <person name="Kodira C."/>
            <person name="Lennard N."/>
            <person name="Logue M.E."/>
            <person name="Martin R."/>
            <person name="Neiman A.M."/>
            <person name="Nikolaou E."/>
            <person name="Quail M.A."/>
            <person name="Quinn J."/>
            <person name="Santos M.C."/>
            <person name="Schmitzberger F.F."/>
            <person name="Sherlock G."/>
            <person name="Shah P."/>
            <person name="Silverstein K.A.T."/>
            <person name="Skrzypek M.S."/>
            <person name="Soll D."/>
            <person name="Staggs R."/>
            <person name="Stansfield I."/>
            <person name="Stumpf M.P.H."/>
            <person name="Sudbery P.E."/>
            <person name="Srikantha T."/>
            <person name="Zeng Q."/>
            <person name="Berman J."/>
            <person name="Berriman M."/>
            <person name="Heitman J."/>
            <person name="Gow N.A.R."/>
            <person name="Lorenz M.C."/>
            <person name="Birren B.W."/>
            <person name="Kellis M."/>
            <person name="Cuomo C.A."/>
        </authorList>
    </citation>
    <scope>NUCLEOTIDE SEQUENCE [LARGE SCALE GENOMIC DNA]</scope>
    <source>
        <strain>ATCC 11503 / BCRC 21390 / CBS 2605 / JCM 1781 / NBRC 1676 / NRRL YB-4239</strain>
    </source>
</reference>
<gene>
    <name evidence="1" type="primary">TRM8</name>
    <name type="ORF">LELG_05673</name>
</gene>
<keyword id="KW-0489">Methyltransferase</keyword>
<keyword id="KW-0539">Nucleus</keyword>
<keyword id="KW-1185">Reference proteome</keyword>
<keyword id="KW-0694">RNA-binding</keyword>
<keyword id="KW-0949">S-adenosyl-L-methionine</keyword>
<keyword id="KW-0808">Transferase</keyword>
<keyword id="KW-0819">tRNA processing</keyword>
<keyword id="KW-0820">tRNA-binding</keyword>
<name>TRMB_LODEL</name>
<proteinExistence type="inferred from homology"/>
<sequence>MSSTAPLDSKATEQITTAAESKHNETQATRRKRYREAQEQTRNKHLRFQASPTPEEASPELPSDEVAKLPQKRFYRQRAHSNPFSDHNLEYPVLPSQMDWSTIYPHYTPASLRKVEIADIGCGFGGLLIDLGPQFPESLILGMEIRVQVTNYVQDRLIALREIHKADAYNYDNLGVIRGNAMKFLPNFFTKGQLSKMFFCFPDPHFKQRKHKARIITNTLLSEYAYVLREGGVVYTITDVEDLHNWMVKHLDEHPLFERLSKEWEEQDPCVKIMYNSTEEGQKVARNQGSKYVACYKRLPNPDDCE</sequence>
<accession>A5E7T4</accession>
<comment type="function">
    <text evidence="1">Catalyzes the formation of N(7)-methylguanine at position 46 (m7G46) in tRNA.</text>
</comment>
<comment type="catalytic activity">
    <reaction evidence="1">
        <text>guanosine(46) in tRNA + S-adenosyl-L-methionine = N(7)-methylguanosine(46) in tRNA + S-adenosyl-L-homocysteine</text>
        <dbReference type="Rhea" id="RHEA:42708"/>
        <dbReference type="Rhea" id="RHEA-COMP:10188"/>
        <dbReference type="Rhea" id="RHEA-COMP:10189"/>
        <dbReference type="ChEBI" id="CHEBI:57856"/>
        <dbReference type="ChEBI" id="CHEBI:59789"/>
        <dbReference type="ChEBI" id="CHEBI:74269"/>
        <dbReference type="ChEBI" id="CHEBI:74480"/>
        <dbReference type="EC" id="2.1.1.33"/>
    </reaction>
</comment>
<comment type="pathway">
    <text evidence="1">tRNA modification; N(7)-methylguanine-tRNA biosynthesis.</text>
</comment>
<comment type="subunit">
    <text evidence="1">Forms a complex with TRM82.</text>
</comment>
<comment type="subcellular location">
    <subcellularLocation>
        <location evidence="1">Nucleus</location>
    </subcellularLocation>
</comment>
<comment type="similarity">
    <text evidence="1">Belongs to the class I-like SAM-binding methyltransferase superfamily. TrmB family.</text>
</comment>
<feature type="chain" id="PRO_0000370598" description="tRNA (guanine-N(7)-)-methyltransferase">
    <location>
        <begin position="1"/>
        <end position="306"/>
    </location>
</feature>
<feature type="region of interest" description="Disordered" evidence="2">
    <location>
        <begin position="1"/>
        <end position="65"/>
    </location>
</feature>
<feature type="compositionally biased region" description="Polar residues" evidence="2">
    <location>
        <begin position="1"/>
        <end position="19"/>
    </location>
</feature>
<feature type="active site" evidence="1">
    <location>
        <position position="203"/>
    </location>
</feature>
<feature type="binding site" evidence="1">
    <location>
        <position position="121"/>
    </location>
    <ligand>
        <name>S-adenosyl-L-methionine</name>
        <dbReference type="ChEBI" id="CHEBI:59789"/>
    </ligand>
</feature>
<feature type="binding site" evidence="1">
    <location>
        <begin position="144"/>
        <end position="145"/>
    </location>
    <ligand>
        <name>S-adenosyl-L-methionine</name>
        <dbReference type="ChEBI" id="CHEBI:59789"/>
    </ligand>
</feature>
<feature type="binding site" evidence="1">
    <location>
        <begin position="180"/>
        <end position="181"/>
    </location>
    <ligand>
        <name>S-adenosyl-L-methionine</name>
        <dbReference type="ChEBI" id="CHEBI:59789"/>
    </ligand>
</feature>
<feature type="binding site" evidence="1">
    <location>
        <position position="200"/>
    </location>
    <ligand>
        <name>S-adenosyl-L-methionine</name>
        <dbReference type="ChEBI" id="CHEBI:59789"/>
    </ligand>
</feature>
<feature type="binding site" evidence="1">
    <location>
        <begin position="278"/>
        <end position="280"/>
    </location>
    <ligand>
        <name>S-adenosyl-L-methionine</name>
        <dbReference type="ChEBI" id="CHEBI:59789"/>
    </ligand>
</feature>